<protein>
    <recommendedName>
        <fullName evidence="1">Probable GTP-binding protein EngB</fullName>
    </recommendedName>
</protein>
<accession>Q5PKC6</accession>
<comment type="function">
    <text evidence="1">Necessary for normal cell division and for the maintenance of normal septation.</text>
</comment>
<comment type="cofactor">
    <cofactor evidence="1">
        <name>Mg(2+)</name>
        <dbReference type="ChEBI" id="CHEBI:18420"/>
    </cofactor>
</comment>
<comment type="similarity">
    <text evidence="1">Belongs to the TRAFAC class TrmE-Era-EngA-EngB-Septin-like GTPase superfamily. EngB GTPase family.</text>
</comment>
<gene>
    <name evidence="1" type="primary">engB</name>
    <name type="ordered locus">SPA3842</name>
</gene>
<reference key="1">
    <citation type="journal article" date="2004" name="Nat. Genet.">
        <title>Comparison of genome degradation in Paratyphi A and Typhi, human-restricted serovars of Salmonella enterica that cause typhoid.</title>
        <authorList>
            <person name="McClelland M."/>
            <person name="Sanderson K.E."/>
            <person name="Clifton S.W."/>
            <person name="Latreille P."/>
            <person name="Porwollik S."/>
            <person name="Sabo A."/>
            <person name="Meyer R."/>
            <person name="Bieri T."/>
            <person name="Ozersky P."/>
            <person name="McLellan M."/>
            <person name="Harkins C.R."/>
            <person name="Wang C."/>
            <person name="Nguyen C."/>
            <person name="Berghoff A."/>
            <person name="Elliott G."/>
            <person name="Kohlberg S."/>
            <person name="Strong C."/>
            <person name="Du F."/>
            <person name="Carter J."/>
            <person name="Kremizki C."/>
            <person name="Layman D."/>
            <person name="Leonard S."/>
            <person name="Sun H."/>
            <person name="Fulton L."/>
            <person name="Nash W."/>
            <person name="Miner T."/>
            <person name="Minx P."/>
            <person name="Delehaunty K."/>
            <person name="Fronick C."/>
            <person name="Magrini V."/>
            <person name="Nhan M."/>
            <person name="Warren W."/>
            <person name="Florea L."/>
            <person name="Spieth J."/>
            <person name="Wilson R.K."/>
        </authorList>
    </citation>
    <scope>NUCLEOTIDE SEQUENCE [LARGE SCALE GENOMIC DNA]</scope>
    <source>
        <strain>ATCC 9150 / SARB42</strain>
    </source>
</reference>
<organism>
    <name type="scientific">Salmonella paratyphi A (strain ATCC 9150 / SARB42)</name>
    <dbReference type="NCBI Taxonomy" id="295319"/>
    <lineage>
        <taxon>Bacteria</taxon>
        <taxon>Pseudomonadati</taxon>
        <taxon>Pseudomonadota</taxon>
        <taxon>Gammaproteobacteria</taxon>
        <taxon>Enterobacterales</taxon>
        <taxon>Enterobacteriaceae</taxon>
        <taxon>Salmonella</taxon>
    </lineage>
</organism>
<evidence type="ECO:0000255" key="1">
    <source>
        <dbReference type="HAMAP-Rule" id="MF_00321"/>
    </source>
</evidence>
<proteinExistence type="inferred from homology"/>
<keyword id="KW-0131">Cell cycle</keyword>
<keyword id="KW-0132">Cell division</keyword>
<keyword id="KW-0342">GTP-binding</keyword>
<keyword id="KW-0460">Magnesium</keyword>
<keyword id="KW-0479">Metal-binding</keyword>
<keyword id="KW-0547">Nucleotide-binding</keyword>
<keyword id="KW-0717">Septation</keyword>
<dbReference type="EMBL" id="CP000026">
    <property type="protein sequence ID" value="AAV79610.1"/>
    <property type="molecule type" value="Genomic_DNA"/>
</dbReference>
<dbReference type="SMR" id="Q5PKC6"/>
<dbReference type="KEGG" id="spt:SPA3842"/>
<dbReference type="HOGENOM" id="CLU_033732_1_0_6"/>
<dbReference type="Proteomes" id="UP000008185">
    <property type="component" value="Chromosome"/>
</dbReference>
<dbReference type="GO" id="GO:0005829">
    <property type="term" value="C:cytosol"/>
    <property type="evidence" value="ECO:0007669"/>
    <property type="project" value="TreeGrafter"/>
</dbReference>
<dbReference type="GO" id="GO:0005525">
    <property type="term" value="F:GTP binding"/>
    <property type="evidence" value="ECO:0007669"/>
    <property type="project" value="UniProtKB-UniRule"/>
</dbReference>
<dbReference type="GO" id="GO:0046872">
    <property type="term" value="F:metal ion binding"/>
    <property type="evidence" value="ECO:0007669"/>
    <property type="project" value="UniProtKB-KW"/>
</dbReference>
<dbReference type="GO" id="GO:0000917">
    <property type="term" value="P:division septum assembly"/>
    <property type="evidence" value="ECO:0007669"/>
    <property type="project" value="UniProtKB-KW"/>
</dbReference>
<dbReference type="CDD" id="cd01876">
    <property type="entry name" value="YihA_EngB"/>
    <property type="match status" value="1"/>
</dbReference>
<dbReference type="FunFam" id="3.40.50.300:FF:000098">
    <property type="entry name" value="Probable GTP-binding protein EngB"/>
    <property type="match status" value="1"/>
</dbReference>
<dbReference type="Gene3D" id="3.40.50.300">
    <property type="entry name" value="P-loop containing nucleotide triphosphate hydrolases"/>
    <property type="match status" value="1"/>
</dbReference>
<dbReference type="HAMAP" id="MF_00321">
    <property type="entry name" value="GTPase_EngB"/>
    <property type="match status" value="1"/>
</dbReference>
<dbReference type="InterPro" id="IPR030393">
    <property type="entry name" value="G_ENGB_dom"/>
</dbReference>
<dbReference type="InterPro" id="IPR006073">
    <property type="entry name" value="GTP-bd"/>
</dbReference>
<dbReference type="InterPro" id="IPR019987">
    <property type="entry name" value="GTP-bd_ribosome_bio_YsxC"/>
</dbReference>
<dbReference type="InterPro" id="IPR027417">
    <property type="entry name" value="P-loop_NTPase"/>
</dbReference>
<dbReference type="NCBIfam" id="TIGR03598">
    <property type="entry name" value="GTPase_YsxC"/>
    <property type="match status" value="1"/>
</dbReference>
<dbReference type="PANTHER" id="PTHR11649:SF13">
    <property type="entry name" value="ENGB-TYPE G DOMAIN-CONTAINING PROTEIN"/>
    <property type="match status" value="1"/>
</dbReference>
<dbReference type="PANTHER" id="PTHR11649">
    <property type="entry name" value="MSS1/TRME-RELATED GTP-BINDING PROTEIN"/>
    <property type="match status" value="1"/>
</dbReference>
<dbReference type="Pfam" id="PF01926">
    <property type="entry name" value="MMR_HSR1"/>
    <property type="match status" value="1"/>
</dbReference>
<dbReference type="SUPFAM" id="SSF52540">
    <property type="entry name" value="P-loop containing nucleoside triphosphate hydrolases"/>
    <property type="match status" value="1"/>
</dbReference>
<dbReference type="PROSITE" id="PS51706">
    <property type="entry name" value="G_ENGB"/>
    <property type="match status" value="1"/>
</dbReference>
<sequence>MTNLNYQQTHFVMSAPDIRHLPSDCGIEVAFAGRSNAGKSSALNTLTNQKSLARTSKTPGRTQLINLFEVVDGKRLVDLPGYGYAEVPEEMKRKWQRALGEYLEKRQSLQGLVVLMDIRHPLKDLDQQMIQWAVESNIQVLVLLTKADKLASGARKAQLNMVREAVLAFNGDVQVEAFSSLKKQGVDKLRQKLDSWFSELAPVEEIQDGE</sequence>
<name>ENGB_SALPA</name>
<feature type="chain" id="PRO_0000266941" description="Probable GTP-binding protein EngB">
    <location>
        <begin position="1"/>
        <end position="210"/>
    </location>
</feature>
<feature type="domain" description="EngB-type G" evidence="1">
    <location>
        <begin position="25"/>
        <end position="199"/>
    </location>
</feature>
<feature type="binding site" evidence="1">
    <location>
        <begin position="33"/>
        <end position="40"/>
    </location>
    <ligand>
        <name>GTP</name>
        <dbReference type="ChEBI" id="CHEBI:37565"/>
    </ligand>
</feature>
<feature type="binding site" evidence="1">
    <location>
        <position position="40"/>
    </location>
    <ligand>
        <name>Mg(2+)</name>
        <dbReference type="ChEBI" id="CHEBI:18420"/>
    </ligand>
</feature>
<feature type="binding site" evidence="1">
    <location>
        <begin position="60"/>
        <end position="64"/>
    </location>
    <ligand>
        <name>GTP</name>
        <dbReference type="ChEBI" id="CHEBI:37565"/>
    </ligand>
</feature>
<feature type="binding site" evidence="1">
    <location>
        <position position="62"/>
    </location>
    <ligand>
        <name>Mg(2+)</name>
        <dbReference type="ChEBI" id="CHEBI:18420"/>
    </ligand>
</feature>
<feature type="binding site" evidence="1">
    <location>
        <begin position="78"/>
        <end position="81"/>
    </location>
    <ligand>
        <name>GTP</name>
        <dbReference type="ChEBI" id="CHEBI:37565"/>
    </ligand>
</feature>
<feature type="binding site" evidence="1">
    <location>
        <begin position="145"/>
        <end position="148"/>
    </location>
    <ligand>
        <name>GTP</name>
        <dbReference type="ChEBI" id="CHEBI:37565"/>
    </ligand>
</feature>
<feature type="binding site" evidence="1">
    <location>
        <begin position="178"/>
        <end position="180"/>
    </location>
    <ligand>
        <name>GTP</name>
        <dbReference type="ChEBI" id="CHEBI:37565"/>
    </ligand>
</feature>